<feature type="chain" id="PRO_1000075678" description="4-hydroxy-tetrahydrodipicolinate reductase">
    <location>
        <begin position="1"/>
        <end position="273"/>
    </location>
</feature>
<feature type="active site" description="Proton donor/acceptor" evidence="1">
    <location>
        <position position="159"/>
    </location>
</feature>
<feature type="active site" description="Proton donor" evidence="1">
    <location>
        <position position="163"/>
    </location>
</feature>
<feature type="binding site" evidence="1">
    <location>
        <begin position="12"/>
        <end position="17"/>
    </location>
    <ligand>
        <name>NAD(+)</name>
        <dbReference type="ChEBI" id="CHEBI:57540"/>
    </ligand>
</feature>
<feature type="binding site" evidence="1">
    <location>
        <position position="38"/>
    </location>
    <ligand>
        <name>NAD(+)</name>
        <dbReference type="ChEBI" id="CHEBI:57540"/>
    </ligand>
</feature>
<feature type="binding site" evidence="1">
    <location>
        <position position="39"/>
    </location>
    <ligand>
        <name>NADP(+)</name>
        <dbReference type="ChEBI" id="CHEBI:58349"/>
    </ligand>
</feature>
<feature type="binding site" evidence="1">
    <location>
        <begin position="102"/>
        <end position="104"/>
    </location>
    <ligand>
        <name>NAD(+)</name>
        <dbReference type="ChEBI" id="CHEBI:57540"/>
    </ligand>
</feature>
<feature type="binding site" evidence="1">
    <location>
        <begin position="126"/>
        <end position="129"/>
    </location>
    <ligand>
        <name>NAD(+)</name>
        <dbReference type="ChEBI" id="CHEBI:57540"/>
    </ligand>
</feature>
<feature type="binding site" evidence="1">
    <location>
        <position position="160"/>
    </location>
    <ligand>
        <name>(S)-2,3,4,5-tetrahydrodipicolinate</name>
        <dbReference type="ChEBI" id="CHEBI:16845"/>
    </ligand>
</feature>
<feature type="binding site" evidence="1">
    <location>
        <begin position="169"/>
        <end position="170"/>
    </location>
    <ligand>
        <name>(S)-2,3,4,5-tetrahydrodipicolinate</name>
        <dbReference type="ChEBI" id="CHEBI:16845"/>
    </ligand>
</feature>
<reference key="1">
    <citation type="submission" date="2008-02" db="EMBL/GenBank/DDBJ databases">
        <title>Complete sequence of Escherichia coli C str. ATCC 8739.</title>
        <authorList>
            <person name="Copeland A."/>
            <person name="Lucas S."/>
            <person name="Lapidus A."/>
            <person name="Glavina del Rio T."/>
            <person name="Dalin E."/>
            <person name="Tice H."/>
            <person name="Bruce D."/>
            <person name="Goodwin L."/>
            <person name="Pitluck S."/>
            <person name="Kiss H."/>
            <person name="Brettin T."/>
            <person name="Detter J.C."/>
            <person name="Han C."/>
            <person name="Kuske C.R."/>
            <person name="Schmutz J."/>
            <person name="Larimer F."/>
            <person name="Land M."/>
            <person name="Hauser L."/>
            <person name="Kyrpides N."/>
            <person name="Mikhailova N."/>
            <person name="Ingram L."/>
            <person name="Richardson P."/>
        </authorList>
    </citation>
    <scope>NUCLEOTIDE SEQUENCE [LARGE SCALE GENOMIC DNA]</scope>
    <source>
        <strain>ATCC 8739 / DSM 1576 / NBRC 3972 / NCIMB 8545 / WDCM 00012 / Crooks</strain>
    </source>
</reference>
<sequence>MHDANIRVAIAGAGGRMGRQLIQAALALEGVQLGAALEREGSSLLGSDAGELAGAGKTGVTVQSSLDAVKDDFDVFIDFTRPEGTLNHLAFCRQHGKGMVIGTTGFDEAGKQAIRDAAADIAIVFAANFSVGVNVMLKLLEKAAKVMGDYTDIEIIEAHHRHKVDAPSGTALAMGEAIAHALDKDLKDCAVYSREGHTGERVPGTIGFATVRAGDIVGEHTAMFADIGERLEITHKASSRMTFANGAVRSALWLSGKESGLFDMRDVLDLNNL</sequence>
<accession>B1IRE5</accession>
<organism>
    <name type="scientific">Escherichia coli (strain ATCC 8739 / DSM 1576 / NBRC 3972 / NCIMB 8545 / WDCM 00012 / Crooks)</name>
    <dbReference type="NCBI Taxonomy" id="481805"/>
    <lineage>
        <taxon>Bacteria</taxon>
        <taxon>Pseudomonadati</taxon>
        <taxon>Pseudomonadota</taxon>
        <taxon>Gammaproteobacteria</taxon>
        <taxon>Enterobacterales</taxon>
        <taxon>Enterobacteriaceae</taxon>
        <taxon>Escherichia</taxon>
    </lineage>
</organism>
<comment type="function">
    <text evidence="1">Catalyzes the conversion of 4-hydroxy-tetrahydrodipicolinate (HTPA) to tetrahydrodipicolinate.</text>
</comment>
<comment type="catalytic activity">
    <reaction evidence="1">
        <text>(S)-2,3,4,5-tetrahydrodipicolinate + NAD(+) + H2O = (2S,4S)-4-hydroxy-2,3,4,5-tetrahydrodipicolinate + NADH + H(+)</text>
        <dbReference type="Rhea" id="RHEA:35323"/>
        <dbReference type="ChEBI" id="CHEBI:15377"/>
        <dbReference type="ChEBI" id="CHEBI:15378"/>
        <dbReference type="ChEBI" id="CHEBI:16845"/>
        <dbReference type="ChEBI" id="CHEBI:57540"/>
        <dbReference type="ChEBI" id="CHEBI:57945"/>
        <dbReference type="ChEBI" id="CHEBI:67139"/>
        <dbReference type="EC" id="1.17.1.8"/>
    </reaction>
</comment>
<comment type="catalytic activity">
    <reaction evidence="1">
        <text>(S)-2,3,4,5-tetrahydrodipicolinate + NADP(+) + H2O = (2S,4S)-4-hydroxy-2,3,4,5-tetrahydrodipicolinate + NADPH + H(+)</text>
        <dbReference type="Rhea" id="RHEA:35331"/>
        <dbReference type="ChEBI" id="CHEBI:15377"/>
        <dbReference type="ChEBI" id="CHEBI:15378"/>
        <dbReference type="ChEBI" id="CHEBI:16845"/>
        <dbReference type="ChEBI" id="CHEBI:57783"/>
        <dbReference type="ChEBI" id="CHEBI:58349"/>
        <dbReference type="ChEBI" id="CHEBI:67139"/>
        <dbReference type="EC" id="1.17.1.8"/>
    </reaction>
</comment>
<comment type="pathway">
    <text evidence="1">Amino-acid biosynthesis; L-lysine biosynthesis via DAP pathway; (S)-tetrahydrodipicolinate from L-aspartate: step 4/4.</text>
</comment>
<comment type="subunit">
    <text evidence="1">Homotetramer.</text>
</comment>
<comment type="subcellular location">
    <subcellularLocation>
        <location evidence="1">Cytoplasm</location>
    </subcellularLocation>
</comment>
<comment type="similarity">
    <text evidence="1">Belongs to the DapB family.</text>
</comment>
<comment type="caution">
    <text evidence="2">Was originally thought to be a dihydrodipicolinate reductase (DHDPR), catalyzing the conversion of dihydrodipicolinate to tetrahydrodipicolinate. However, it was shown in E.coli that the substrate of the enzymatic reaction is not dihydrodipicolinate (DHDP) but in fact (2S,4S)-4-hydroxy-2,3,4,5-tetrahydrodipicolinic acid (HTPA), the product released by the DapA-catalyzed reaction.</text>
</comment>
<keyword id="KW-0028">Amino-acid biosynthesis</keyword>
<keyword id="KW-0963">Cytoplasm</keyword>
<keyword id="KW-0220">Diaminopimelate biosynthesis</keyword>
<keyword id="KW-0457">Lysine biosynthesis</keyword>
<keyword id="KW-0520">NAD</keyword>
<keyword id="KW-0521">NADP</keyword>
<keyword id="KW-0560">Oxidoreductase</keyword>
<dbReference type="EC" id="1.17.1.8" evidence="1"/>
<dbReference type="EMBL" id="CP000946">
    <property type="protein sequence ID" value="ACA79238.1"/>
    <property type="molecule type" value="Genomic_DNA"/>
</dbReference>
<dbReference type="RefSeq" id="WP_000543604.1">
    <property type="nucleotide sequence ID" value="NZ_MTFT01000035.1"/>
</dbReference>
<dbReference type="SMR" id="B1IRE5"/>
<dbReference type="KEGG" id="ecl:EcolC_3624"/>
<dbReference type="HOGENOM" id="CLU_047479_2_1_6"/>
<dbReference type="UniPathway" id="UPA00034">
    <property type="reaction ID" value="UER00018"/>
</dbReference>
<dbReference type="GO" id="GO:0005829">
    <property type="term" value="C:cytosol"/>
    <property type="evidence" value="ECO:0007669"/>
    <property type="project" value="TreeGrafter"/>
</dbReference>
<dbReference type="GO" id="GO:0008839">
    <property type="term" value="F:4-hydroxy-tetrahydrodipicolinate reductase"/>
    <property type="evidence" value="ECO:0007669"/>
    <property type="project" value="UniProtKB-EC"/>
</dbReference>
<dbReference type="GO" id="GO:0051287">
    <property type="term" value="F:NAD binding"/>
    <property type="evidence" value="ECO:0007669"/>
    <property type="project" value="UniProtKB-UniRule"/>
</dbReference>
<dbReference type="GO" id="GO:0050661">
    <property type="term" value="F:NADP binding"/>
    <property type="evidence" value="ECO:0007669"/>
    <property type="project" value="UniProtKB-UniRule"/>
</dbReference>
<dbReference type="GO" id="GO:0016726">
    <property type="term" value="F:oxidoreductase activity, acting on CH or CH2 groups, NAD or NADP as acceptor"/>
    <property type="evidence" value="ECO:0007669"/>
    <property type="project" value="UniProtKB-UniRule"/>
</dbReference>
<dbReference type="GO" id="GO:0019877">
    <property type="term" value="P:diaminopimelate biosynthetic process"/>
    <property type="evidence" value="ECO:0007669"/>
    <property type="project" value="UniProtKB-UniRule"/>
</dbReference>
<dbReference type="GO" id="GO:0009089">
    <property type="term" value="P:lysine biosynthetic process via diaminopimelate"/>
    <property type="evidence" value="ECO:0007669"/>
    <property type="project" value="UniProtKB-UniRule"/>
</dbReference>
<dbReference type="CDD" id="cd02274">
    <property type="entry name" value="DHDPR_N"/>
    <property type="match status" value="1"/>
</dbReference>
<dbReference type="FunFam" id="3.30.360.10:FF:000004">
    <property type="entry name" value="4-hydroxy-tetrahydrodipicolinate reductase"/>
    <property type="match status" value="1"/>
</dbReference>
<dbReference type="FunFam" id="3.40.50.720:FF:000048">
    <property type="entry name" value="4-hydroxy-tetrahydrodipicolinate reductase"/>
    <property type="match status" value="1"/>
</dbReference>
<dbReference type="Gene3D" id="3.30.360.10">
    <property type="entry name" value="Dihydrodipicolinate Reductase, domain 2"/>
    <property type="match status" value="1"/>
</dbReference>
<dbReference type="Gene3D" id="3.40.50.720">
    <property type="entry name" value="NAD(P)-binding Rossmann-like Domain"/>
    <property type="match status" value="1"/>
</dbReference>
<dbReference type="HAMAP" id="MF_00102">
    <property type="entry name" value="DapB"/>
    <property type="match status" value="1"/>
</dbReference>
<dbReference type="InterPro" id="IPR022663">
    <property type="entry name" value="DapB_C"/>
</dbReference>
<dbReference type="InterPro" id="IPR000846">
    <property type="entry name" value="DapB_N"/>
</dbReference>
<dbReference type="InterPro" id="IPR022664">
    <property type="entry name" value="DapB_N_CS"/>
</dbReference>
<dbReference type="InterPro" id="IPR023940">
    <property type="entry name" value="DHDPR_bac"/>
</dbReference>
<dbReference type="InterPro" id="IPR036291">
    <property type="entry name" value="NAD(P)-bd_dom_sf"/>
</dbReference>
<dbReference type="NCBIfam" id="TIGR00036">
    <property type="entry name" value="dapB"/>
    <property type="match status" value="1"/>
</dbReference>
<dbReference type="PANTHER" id="PTHR20836:SF0">
    <property type="entry name" value="4-HYDROXY-TETRAHYDRODIPICOLINATE REDUCTASE 1, CHLOROPLASTIC-RELATED"/>
    <property type="match status" value="1"/>
</dbReference>
<dbReference type="PANTHER" id="PTHR20836">
    <property type="entry name" value="DIHYDRODIPICOLINATE REDUCTASE"/>
    <property type="match status" value="1"/>
</dbReference>
<dbReference type="Pfam" id="PF05173">
    <property type="entry name" value="DapB_C"/>
    <property type="match status" value="1"/>
</dbReference>
<dbReference type="Pfam" id="PF01113">
    <property type="entry name" value="DapB_N"/>
    <property type="match status" value="1"/>
</dbReference>
<dbReference type="PIRSF" id="PIRSF000161">
    <property type="entry name" value="DHPR"/>
    <property type="match status" value="1"/>
</dbReference>
<dbReference type="SUPFAM" id="SSF55347">
    <property type="entry name" value="Glyceraldehyde-3-phosphate dehydrogenase-like, C-terminal domain"/>
    <property type="match status" value="1"/>
</dbReference>
<dbReference type="SUPFAM" id="SSF51735">
    <property type="entry name" value="NAD(P)-binding Rossmann-fold domains"/>
    <property type="match status" value="1"/>
</dbReference>
<dbReference type="PROSITE" id="PS01298">
    <property type="entry name" value="DAPB"/>
    <property type="match status" value="1"/>
</dbReference>
<evidence type="ECO:0000255" key="1">
    <source>
        <dbReference type="HAMAP-Rule" id="MF_00102"/>
    </source>
</evidence>
<evidence type="ECO:0000305" key="2"/>
<proteinExistence type="inferred from homology"/>
<gene>
    <name evidence="1" type="primary">dapB</name>
    <name type="ordered locus">EcolC_3624</name>
</gene>
<name>DAPB_ECOLC</name>
<protein>
    <recommendedName>
        <fullName evidence="1">4-hydroxy-tetrahydrodipicolinate reductase</fullName>
        <shortName evidence="1">HTPA reductase</shortName>
        <ecNumber evidence="1">1.17.1.8</ecNumber>
    </recommendedName>
</protein>